<evidence type="ECO:0000255" key="1">
    <source>
        <dbReference type="HAMAP-Rule" id="MF_00023"/>
    </source>
</evidence>
<proteinExistence type="inferred from homology"/>
<name>SSRP_ECOHS</name>
<feature type="chain" id="PRO_1000057206" description="SsrA-binding protein">
    <location>
        <begin position="1"/>
        <end position="160"/>
    </location>
</feature>
<accession>A8A3C6</accession>
<gene>
    <name evidence="1" type="primary">smpB</name>
    <name type="ordered locus">EcHS_A2778</name>
</gene>
<reference key="1">
    <citation type="journal article" date="2008" name="J. Bacteriol.">
        <title>The pangenome structure of Escherichia coli: comparative genomic analysis of E. coli commensal and pathogenic isolates.</title>
        <authorList>
            <person name="Rasko D.A."/>
            <person name="Rosovitz M.J."/>
            <person name="Myers G.S.A."/>
            <person name="Mongodin E.F."/>
            <person name="Fricke W.F."/>
            <person name="Gajer P."/>
            <person name="Crabtree J."/>
            <person name="Sebaihia M."/>
            <person name="Thomson N.R."/>
            <person name="Chaudhuri R."/>
            <person name="Henderson I.R."/>
            <person name="Sperandio V."/>
            <person name="Ravel J."/>
        </authorList>
    </citation>
    <scope>NUCLEOTIDE SEQUENCE [LARGE SCALE GENOMIC DNA]</scope>
    <source>
        <strain>HS</strain>
    </source>
</reference>
<organism>
    <name type="scientific">Escherichia coli O9:H4 (strain HS)</name>
    <dbReference type="NCBI Taxonomy" id="331112"/>
    <lineage>
        <taxon>Bacteria</taxon>
        <taxon>Pseudomonadati</taxon>
        <taxon>Pseudomonadota</taxon>
        <taxon>Gammaproteobacteria</taxon>
        <taxon>Enterobacterales</taxon>
        <taxon>Enterobacteriaceae</taxon>
        <taxon>Escherichia</taxon>
    </lineage>
</organism>
<comment type="function">
    <text evidence="1">Required for rescue of stalled ribosomes mediated by trans-translation. Binds to transfer-messenger RNA (tmRNA), required for stable association of tmRNA with ribosomes. tmRNA and SmpB together mimic tRNA shape, replacing the anticodon stem-loop with SmpB. tmRNA is encoded by the ssrA gene; the 2 termini fold to resemble tRNA(Ala) and it encodes a 'tag peptide', a short internal open reading frame. During trans-translation Ala-aminoacylated tmRNA acts like a tRNA, entering the A-site of stalled ribosomes, displacing the stalled mRNA. The ribosome then switches to translate the ORF on the tmRNA; the nascent peptide is terminated with the 'tag peptide' encoded by the tmRNA and targeted for degradation. The ribosome is freed to recommence translation, which seems to be the essential function of trans-translation.</text>
</comment>
<comment type="subcellular location">
    <subcellularLocation>
        <location evidence="1">Cytoplasm</location>
    </subcellularLocation>
    <text evidence="1">The tmRNA-SmpB complex associates with stalled 70S ribosomes.</text>
</comment>
<comment type="similarity">
    <text evidence="1">Belongs to the SmpB family.</text>
</comment>
<sequence>MTKKKAHKPGSATIALNKRARHEYFIEEEFEAGLALQGWEVKSLRAGKANISDSYVLLRDGEAFLFGANITPMAVASTHVVCDPTRTRKLLLNQRELDSLYGRVNREGYTVVALSLYWKNAWCKVKIGVAKGKKQHDKRSDIKEREWQVDKARIMKNAHR</sequence>
<protein>
    <recommendedName>
        <fullName evidence="1">SsrA-binding protein</fullName>
    </recommendedName>
    <alternativeName>
        <fullName evidence="1">Small protein B</fullName>
    </alternativeName>
</protein>
<dbReference type="EMBL" id="CP000802">
    <property type="protein sequence ID" value="ABV07030.1"/>
    <property type="molecule type" value="Genomic_DNA"/>
</dbReference>
<dbReference type="RefSeq" id="WP_000162574.1">
    <property type="nucleotide sequence ID" value="NC_009800.1"/>
</dbReference>
<dbReference type="SMR" id="A8A3C6"/>
<dbReference type="GeneID" id="93774470"/>
<dbReference type="KEGG" id="ecx:EcHS_A2778"/>
<dbReference type="HOGENOM" id="CLU_108953_3_0_6"/>
<dbReference type="GO" id="GO:0005829">
    <property type="term" value="C:cytosol"/>
    <property type="evidence" value="ECO:0007669"/>
    <property type="project" value="TreeGrafter"/>
</dbReference>
<dbReference type="GO" id="GO:0003723">
    <property type="term" value="F:RNA binding"/>
    <property type="evidence" value="ECO:0007669"/>
    <property type="project" value="UniProtKB-UniRule"/>
</dbReference>
<dbReference type="GO" id="GO:0070929">
    <property type="term" value="P:trans-translation"/>
    <property type="evidence" value="ECO:0007669"/>
    <property type="project" value="UniProtKB-UniRule"/>
</dbReference>
<dbReference type="CDD" id="cd09294">
    <property type="entry name" value="SmpB"/>
    <property type="match status" value="1"/>
</dbReference>
<dbReference type="FunFam" id="2.40.280.10:FF:000001">
    <property type="entry name" value="SsrA-binding protein"/>
    <property type="match status" value="1"/>
</dbReference>
<dbReference type="Gene3D" id="2.40.280.10">
    <property type="match status" value="1"/>
</dbReference>
<dbReference type="HAMAP" id="MF_00023">
    <property type="entry name" value="SmpB"/>
    <property type="match status" value="1"/>
</dbReference>
<dbReference type="InterPro" id="IPR023620">
    <property type="entry name" value="SmpB"/>
</dbReference>
<dbReference type="InterPro" id="IPR000037">
    <property type="entry name" value="SsrA-bd_prot"/>
</dbReference>
<dbReference type="InterPro" id="IPR020081">
    <property type="entry name" value="SsrA-bd_prot_CS"/>
</dbReference>
<dbReference type="NCBIfam" id="NF003843">
    <property type="entry name" value="PRK05422.1"/>
    <property type="match status" value="1"/>
</dbReference>
<dbReference type="NCBIfam" id="TIGR00086">
    <property type="entry name" value="smpB"/>
    <property type="match status" value="1"/>
</dbReference>
<dbReference type="PANTHER" id="PTHR30308:SF2">
    <property type="entry name" value="SSRA-BINDING PROTEIN"/>
    <property type="match status" value="1"/>
</dbReference>
<dbReference type="PANTHER" id="PTHR30308">
    <property type="entry name" value="TMRNA-BINDING COMPONENT OF TRANS-TRANSLATION TAGGING COMPLEX"/>
    <property type="match status" value="1"/>
</dbReference>
<dbReference type="Pfam" id="PF01668">
    <property type="entry name" value="SmpB"/>
    <property type="match status" value="1"/>
</dbReference>
<dbReference type="SUPFAM" id="SSF74982">
    <property type="entry name" value="Small protein B (SmpB)"/>
    <property type="match status" value="1"/>
</dbReference>
<dbReference type="PROSITE" id="PS01317">
    <property type="entry name" value="SSRP"/>
    <property type="match status" value="1"/>
</dbReference>
<keyword id="KW-0963">Cytoplasm</keyword>
<keyword id="KW-0694">RNA-binding</keyword>